<protein>
    <recommendedName>
        <fullName evidence="1">Neuraminidase</fullName>
        <ecNumber evidence="1">3.2.1.18</ecNumber>
    </recommendedName>
</protein>
<organism>
    <name type="scientific">Influenza B virus (strain B/Memphis/6/1986)</name>
    <dbReference type="NCBI Taxonomy" id="11538"/>
    <lineage>
        <taxon>Viruses</taxon>
        <taxon>Riboviria</taxon>
        <taxon>Orthornavirae</taxon>
        <taxon>Negarnaviricota</taxon>
        <taxon>Polyploviricotina</taxon>
        <taxon>Insthoviricetes</taxon>
        <taxon>Articulavirales</taxon>
        <taxon>Orthomyxoviridae</taxon>
        <taxon>Betainfluenzavirus</taxon>
        <taxon>Betainfluenzavirus influenzae</taxon>
        <taxon>Influenza B virus</taxon>
    </lineage>
</organism>
<feature type="chain" id="PRO_0000078735" description="Neuraminidase">
    <location>
        <begin position="1"/>
        <end position="465"/>
    </location>
</feature>
<feature type="topological domain" description="Intravirion" evidence="1">
    <location>
        <begin position="1"/>
        <end position="11"/>
    </location>
</feature>
<feature type="transmembrane region" description="Helical" evidence="1">
    <location>
        <begin position="12"/>
        <end position="34"/>
    </location>
</feature>
<feature type="topological domain" description="Virion surface" evidence="1">
    <location>
        <begin position="35"/>
        <end position="465"/>
    </location>
</feature>
<feature type="region of interest" description="Involved in apical transport and lipid raft association" evidence="1">
    <location>
        <begin position="13"/>
        <end position="35"/>
    </location>
</feature>
<feature type="region of interest" description="Hypervariable stalk region" evidence="1">
    <location>
        <begin position="38"/>
        <end position="85"/>
    </location>
</feature>
<feature type="region of interest" description="Head of neuraminidase" evidence="1">
    <location>
        <begin position="88"/>
        <end position="465"/>
    </location>
</feature>
<feature type="active site" description="Proton donor/acceptor" evidence="1">
    <location>
        <position position="148"/>
    </location>
</feature>
<feature type="active site" description="Nucleophile" evidence="1">
    <location>
        <position position="408"/>
    </location>
</feature>
<feature type="binding site" evidence="1">
    <location>
        <position position="115"/>
    </location>
    <ligand>
        <name>substrate</name>
    </ligand>
</feature>
<feature type="binding site" evidence="1">
    <location>
        <position position="149"/>
    </location>
    <ligand>
        <name>substrate</name>
    </ligand>
</feature>
<feature type="binding site" evidence="1">
    <location>
        <begin position="274"/>
        <end position="275"/>
    </location>
    <ligand>
        <name>substrate</name>
    </ligand>
</feature>
<feature type="binding site" evidence="1">
    <location>
        <position position="291"/>
    </location>
    <ligand>
        <name>substrate</name>
    </ligand>
</feature>
<feature type="binding site" evidence="1">
    <location>
        <position position="292"/>
    </location>
    <ligand>
        <name>Ca(2+)</name>
        <dbReference type="ChEBI" id="CHEBI:29108"/>
    </ligand>
</feature>
<feature type="binding site" evidence="1">
    <location>
        <position position="323"/>
    </location>
    <ligand>
        <name>Ca(2+)</name>
        <dbReference type="ChEBI" id="CHEBI:29108"/>
    </ligand>
</feature>
<feature type="binding site" evidence="1">
    <location>
        <position position="373"/>
    </location>
    <ligand>
        <name>substrate</name>
    </ligand>
</feature>
<feature type="glycosylation site" description="N-linked (GlcNAc...) asparagine; by host" evidence="1">
    <location>
        <position position="55"/>
    </location>
</feature>
<feature type="glycosylation site" description="N-linked (GlcNAc...) asparagine; by host" evidence="1">
    <location>
        <position position="63"/>
    </location>
</feature>
<feature type="glycosylation site" description="N-linked (GlcNAc...) asparagine; by host" evidence="1">
    <location>
        <position position="143"/>
    </location>
</feature>
<feature type="glycosylation site" description="N-linked (GlcNAc...) asparagine; by host" evidence="1">
    <location>
        <position position="283"/>
    </location>
</feature>
<feature type="glycosylation site" description="N-linked (GlcNAc...) asparagine; by host" evidence="1">
    <location>
        <position position="294"/>
    </location>
</feature>
<feature type="disulfide bond" evidence="1">
    <location>
        <begin position="86"/>
        <end position="419"/>
    </location>
</feature>
<feature type="disulfide bond" evidence="1">
    <location>
        <begin position="121"/>
        <end position="126"/>
    </location>
</feature>
<feature type="disulfide bond" evidence="1">
    <location>
        <begin position="181"/>
        <end position="228"/>
    </location>
</feature>
<feature type="disulfide bond" evidence="1">
    <location>
        <begin position="230"/>
        <end position="235"/>
    </location>
</feature>
<feature type="disulfide bond" evidence="1">
    <location>
        <begin position="276"/>
        <end position="290"/>
    </location>
</feature>
<feature type="disulfide bond" evidence="1">
    <location>
        <begin position="278"/>
        <end position="288"/>
    </location>
</feature>
<feature type="disulfide bond" evidence="1">
    <location>
        <begin position="317"/>
        <end position="336"/>
    </location>
</feature>
<feature type="disulfide bond" evidence="1">
    <location>
        <begin position="423"/>
        <end position="446"/>
    </location>
</feature>
<organismHost>
    <name type="scientific">Homo sapiens</name>
    <name type="common">Human</name>
    <dbReference type="NCBI Taxonomy" id="9606"/>
</organismHost>
<accession>P67907</accession>
<accession>P16193</accession>
<accession>P16197</accession>
<dbReference type="EC" id="3.2.1.18" evidence="1"/>
<dbReference type="EMBL" id="M30634">
    <property type="protein sequence ID" value="AAA43737.1"/>
    <property type="molecule type" value="Genomic_RNA"/>
</dbReference>
<dbReference type="PIR" id="C46347">
    <property type="entry name" value="C46347"/>
</dbReference>
<dbReference type="SMR" id="P67907"/>
<dbReference type="GlyCosmos" id="P67907">
    <property type="glycosylation" value="5 sites, No reported glycans"/>
</dbReference>
<dbReference type="GO" id="GO:0020002">
    <property type="term" value="C:host cell plasma membrane"/>
    <property type="evidence" value="ECO:0007669"/>
    <property type="project" value="UniProtKB-SubCell"/>
</dbReference>
<dbReference type="GO" id="GO:0016020">
    <property type="term" value="C:membrane"/>
    <property type="evidence" value="ECO:0007669"/>
    <property type="project" value="UniProtKB-UniRule"/>
</dbReference>
<dbReference type="GO" id="GO:0055036">
    <property type="term" value="C:virion membrane"/>
    <property type="evidence" value="ECO:0007669"/>
    <property type="project" value="UniProtKB-SubCell"/>
</dbReference>
<dbReference type="GO" id="GO:0004308">
    <property type="term" value="F:exo-alpha-sialidase activity"/>
    <property type="evidence" value="ECO:0007669"/>
    <property type="project" value="UniProtKB-UniRule"/>
</dbReference>
<dbReference type="GO" id="GO:0046872">
    <property type="term" value="F:metal ion binding"/>
    <property type="evidence" value="ECO:0007669"/>
    <property type="project" value="UniProtKB-UniRule"/>
</dbReference>
<dbReference type="GO" id="GO:0005975">
    <property type="term" value="P:carbohydrate metabolic process"/>
    <property type="evidence" value="ECO:0007669"/>
    <property type="project" value="InterPro"/>
</dbReference>
<dbReference type="GO" id="GO:0046761">
    <property type="term" value="P:viral budding from plasma membrane"/>
    <property type="evidence" value="ECO:0007669"/>
    <property type="project" value="UniProtKB-UniRule"/>
</dbReference>
<dbReference type="CDD" id="cd15483">
    <property type="entry name" value="Influenza_NA"/>
    <property type="match status" value="1"/>
</dbReference>
<dbReference type="Gene3D" id="2.120.10.10">
    <property type="match status" value="1"/>
</dbReference>
<dbReference type="HAMAP" id="MF_04071">
    <property type="entry name" value="INFV_NRAM"/>
    <property type="match status" value="1"/>
</dbReference>
<dbReference type="InterPro" id="IPR001860">
    <property type="entry name" value="Glyco_hydro_34"/>
</dbReference>
<dbReference type="InterPro" id="IPR033654">
    <property type="entry name" value="Sialidase_Influenza_A/B"/>
</dbReference>
<dbReference type="InterPro" id="IPR036278">
    <property type="entry name" value="Sialidase_sf"/>
</dbReference>
<dbReference type="Pfam" id="PF00064">
    <property type="entry name" value="Neur"/>
    <property type="match status" value="1"/>
</dbReference>
<dbReference type="SUPFAM" id="SSF50939">
    <property type="entry name" value="Sialidases"/>
    <property type="match status" value="1"/>
</dbReference>
<name>NRAM_INBME</name>
<sequence length="465" mass="51382">MLPSTIQTLTLFLTSGGVLLSLYVSASLSYLLYSDILLKFSPKITAPTMTLDCANASNVQAVNRSATKEMTFLLPEPEWTYPRLSCQGSTFQKALLISPHRFGEARGNSAPLIIREPFIACGPKECKHFALTHYAAQPGGYYNGTREDRNKLRHLISVKLGKIPTVENSIFHMAAWSGSACHDGREWTYIGVDGPDSNALIKIKYGEAYTDTYHSYANNILRTQESACNCIGGDCYLMITDGSASGISECRFLKIREGRIIKEIFPTGRVEHTEECTCGFASNKTIECACRDNNYTAKRPFVKLNVETDTAEIRLMCTETYLDTPRPDDGSITGPCESNGDKGRGGIKGGFVHQRMASKIGRWYSRTMSKTERMGMELYVKYDGDPWTDSDALAPSGVMVSIKEPGWYSFGFEIKDKKCDVPCIGIEMVHDGGKKTWHSAATAIYCLMGSGQLLWDTVTGVDMAL</sequence>
<reference key="1">
    <citation type="journal article" date="1990" name="Virology">
        <title>Antigenic, sequence, and crystal variation in influenza B neuraminidase.</title>
        <authorList>
            <person name="Air G.M."/>
            <person name="Laver W.G."/>
            <person name="Luo M."/>
            <person name="Stray S.J."/>
            <person name="Legrone G."/>
            <person name="Webster R.G."/>
        </authorList>
    </citation>
    <scope>NUCLEOTIDE SEQUENCE [GENOMIC RNA]</scope>
</reference>
<reference key="2">
    <citation type="journal article" date="2005" name="N. Engl. J. Med.">
        <title>Neuraminidase inhibitors for influenza.</title>
        <authorList>
            <person name="Moscona A."/>
        </authorList>
    </citation>
    <scope>REVIEW</scope>
</reference>
<keyword id="KW-0106">Calcium</keyword>
<keyword id="KW-1015">Disulfide bond</keyword>
<keyword id="KW-0325">Glycoprotein</keyword>
<keyword id="KW-0326">Glycosidase</keyword>
<keyword id="KW-1032">Host cell membrane</keyword>
<keyword id="KW-1043">Host membrane</keyword>
<keyword id="KW-0378">Hydrolase</keyword>
<keyword id="KW-0472">Membrane</keyword>
<keyword id="KW-0479">Metal-binding</keyword>
<keyword id="KW-0735">Signal-anchor</keyword>
<keyword id="KW-0812">Transmembrane</keyword>
<keyword id="KW-1133">Transmembrane helix</keyword>
<keyword id="KW-0946">Virion</keyword>
<proteinExistence type="inferred from homology"/>
<gene>
    <name evidence="1" type="primary">NA</name>
</gene>
<evidence type="ECO:0000255" key="1">
    <source>
        <dbReference type="HAMAP-Rule" id="MF_04071"/>
    </source>
</evidence>
<comment type="function">
    <text evidence="1">Catalyzes the removal of terminal sialic acid residues from viral and cellular glycoconjugates. Cleaves off the terminal sialic acids on the glycosylated HA during virus budding to facilitate virus release. Additionally helps virus spread through the circulation by further removing sialic acids from the cell surface. These cleavages prevent self-aggregation and ensure the efficient spread of the progeny virus from cell to cell. Otherwise, infection would be limited to one round of replication. Described as a receptor-destroying enzyme because it cleaves a terminal sialic acid from the cellular receptors. May facilitate viral invasion of the upper airways by cleaving the sialic acid moieties on the mucin of the airway epithelial cells. Likely to plays a role in the budding process through its association with lipid rafts during intracellular transport. May additionally display a raft-association independent effect on budding. Plays a role in the determination of host range restriction on replication and virulence. Sialidase activity in late endosome/lysosome traffic seems to enhance virus replication.</text>
</comment>
<comment type="catalytic activity">
    <reaction evidence="1">
        <text>Hydrolysis of alpha-(2-&gt;3)-, alpha-(2-&gt;6)-, alpha-(2-&gt;8)- glycosidic linkages of terminal sialic acid residues in oligosaccharides, glycoproteins, glycolipids, colominic acid and synthetic substrates.</text>
        <dbReference type="EC" id="3.2.1.18"/>
    </reaction>
</comment>
<comment type="cofactor">
    <cofactor evidence="1">
        <name>Ca(2+)</name>
        <dbReference type="ChEBI" id="CHEBI:29108"/>
    </cofactor>
</comment>
<comment type="activity regulation">
    <text evidence="1">Inhibited by the neuraminidase inhibitors zanamivir (Relenza) and oseltamivir (Tamiflu). These drugs interfere with the release of progeny virus from infected cells and are effective against all influenza strains. Resistance to neuraminidase inhibitors is quite rare.</text>
</comment>
<comment type="subunit">
    <text evidence="1">Homotetramer.</text>
</comment>
<comment type="subcellular location">
    <subcellularLocation>
        <location evidence="1">Virion membrane</location>
    </subcellularLocation>
    <subcellularLocation>
        <location evidence="1">Host apical cell membrane</location>
        <topology evidence="1">Single-pass type II membrane protein</topology>
    </subcellularLocation>
    <text evidence="1">Preferentially accumulates at the apical plasma membrane in infected polarized epithelial cells, which is the virus assembly site. Uses lipid rafts for cell surface transport and apical sorting. In the virion, forms a mushroom-shaped spike on the surface of the membrane.</text>
</comment>
<comment type="domain">
    <text evidence="1">Intact N-terminus is essential for virion morphogenesis. Possesses two apical sorting signals, one in the ectodomain, which is likely to be a glycan, and the other in the transmembrane domain. The transmembrane domain also plays a role in lipid raft association.</text>
</comment>
<comment type="PTM">
    <text evidence="1">N-glycosylated.</text>
</comment>
<comment type="miscellaneous">
    <text>The influenza B genome consist of 8 RNA segments. Genetic variation of hemagglutinin and/or neuraminidase genes results in the emergence of new influenza strains. The mechanism of variation can be the result of point mutations or the result of genetic reassortment between segments of two different strains.</text>
</comment>
<comment type="similarity">
    <text evidence="1">Belongs to the glycosyl hydrolase 34 family.</text>
</comment>